<reference key="1">
    <citation type="journal article" date="1997" name="Nature">
        <title>The nucleotide sequence of Saccharomyces cerevisiae chromosome XVI.</title>
        <authorList>
            <person name="Bussey H."/>
            <person name="Storms R.K."/>
            <person name="Ahmed A."/>
            <person name="Albermann K."/>
            <person name="Allen E."/>
            <person name="Ansorge W."/>
            <person name="Araujo R."/>
            <person name="Aparicio A."/>
            <person name="Barrell B.G."/>
            <person name="Badcock K."/>
            <person name="Benes V."/>
            <person name="Botstein D."/>
            <person name="Bowman S."/>
            <person name="Brueckner M."/>
            <person name="Carpenter J."/>
            <person name="Cherry J.M."/>
            <person name="Chung E."/>
            <person name="Churcher C.M."/>
            <person name="Coster F."/>
            <person name="Davis K."/>
            <person name="Davis R.W."/>
            <person name="Dietrich F.S."/>
            <person name="Delius H."/>
            <person name="DiPaolo T."/>
            <person name="Dubois E."/>
            <person name="Duesterhoeft A."/>
            <person name="Duncan M."/>
            <person name="Floeth M."/>
            <person name="Fortin N."/>
            <person name="Friesen J.D."/>
            <person name="Fritz C."/>
            <person name="Goffeau A."/>
            <person name="Hall J."/>
            <person name="Hebling U."/>
            <person name="Heumann K."/>
            <person name="Hilbert H."/>
            <person name="Hillier L.W."/>
            <person name="Hunicke-Smith S."/>
            <person name="Hyman R.W."/>
            <person name="Johnston M."/>
            <person name="Kalman S."/>
            <person name="Kleine K."/>
            <person name="Komp C."/>
            <person name="Kurdi O."/>
            <person name="Lashkari D."/>
            <person name="Lew H."/>
            <person name="Lin A."/>
            <person name="Lin D."/>
            <person name="Louis E.J."/>
            <person name="Marathe R."/>
            <person name="Messenguy F."/>
            <person name="Mewes H.-W."/>
            <person name="Mirtipati S."/>
            <person name="Moestl D."/>
            <person name="Mueller-Auer S."/>
            <person name="Namath A."/>
            <person name="Nentwich U."/>
            <person name="Oefner P."/>
            <person name="Pearson D."/>
            <person name="Petel F.X."/>
            <person name="Pohl T.M."/>
            <person name="Purnelle B."/>
            <person name="Rajandream M.A."/>
            <person name="Rechmann S."/>
            <person name="Rieger M."/>
            <person name="Riles L."/>
            <person name="Roberts D."/>
            <person name="Schaefer M."/>
            <person name="Scharfe M."/>
            <person name="Scherens B."/>
            <person name="Schramm S."/>
            <person name="Schroeder M."/>
            <person name="Sdicu A.-M."/>
            <person name="Tettelin H."/>
            <person name="Urrestarazu L.A."/>
            <person name="Ushinsky S."/>
            <person name="Vierendeels F."/>
            <person name="Vissers S."/>
            <person name="Voss H."/>
            <person name="Walsh S.V."/>
            <person name="Wambutt R."/>
            <person name="Wang Y."/>
            <person name="Wedler E."/>
            <person name="Wedler H."/>
            <person name="Winnett E."/>
            <person name="Zhong W.-W."/>
            <person name="Zollner A."/>
            <person name="Vo D.H."/>
            <person name="Hani J."/>
        </authorList>
    </citation>
    <scope>NUCLEOTIDE SEQUENCE [LARGE SCALE GENOMIC DNA]</scope>
    <source>
        <strain>ATCC 204508 / S288c</strain>
    </source>
</reference>
<reference key="2">
    <citation type="journal article" date="2014" name="G3 (Bethesda)">
        <title>The reference genome sequence of Saccharomyces cerevisiae: Then and now.</title>
        <authorList>
            <person name="Engel S.R."/>
            <person name="Dietrich F.S."/>
            <person name="Fisk D.G."/>
            <person name="Binkley G."/>
            <person name="Balakrishnan R."/>
            <person name="Costanzo M.C."/>
            <person name="Dwight S.S."/>
            <person name="Hitz B.C."/>
            <person name="Karra K."/>
            <person name="Nash R.S."/>
            <person name="Weng S."/>
            <person name="Wong E.D."/>
            <person name="Lloyd P."/>
            <person name="Skrzypek M.S."/>
            <person name="Miyasato S.R."/>
            <person name="Simison M."/>
            <person name="Cherry J.M."/>
        </authorList>
    </citation>
    <scope>GENOME REANNOTATION</scope>
    <source>
        <strain>ATCC 204508 / S288c</strain>
    </source>
</reference>
<reference key="3">
    <citation type="journal article" date="2002" name="J. Biol. Chem.">
        <title>Mrd1p is required for processing of pre-rRNA and for maintenance of steady-state levels of 40 S ribosomal subunits in yeast.</title>
        <authorList>
            <person name="Jin S.-B."/>
            <person name="Zhao J."/>
            <person name="Bjoerk P."/>
            <person name="Schmekel K."/>
            <person name="Ljungdahl P.O."/>
            <person name="Wieslander L."/>
        </authorList>
    </citation>
    <scope>FUNCTION</scope>
    <scope>SUBCELLULAR LOCATION</scope>
    <scope>INTERACTION WITH NOP1</scope>
    <scope>RNA-BINDING</scope>
</reference>
<reference key="4">
    <citation type="journal article" date="2003" name="Nature">
        <title>Global analysis of protein expression in yeast.</title>
        <authorList>
            <person name="Ghaemmaghami S."/>
            <person name="Huh W.-K."/>
            <person name="Bower K."/>
            <person name="Howson R.W."/>
            <person name="Belle A."/>
            <person name="Dephoure N."/>
            <person name="O'Shea E.K."/>
            <person name="Weissman J.S."/>
        </authorList>
    </citation>
    <scope>LEVEL OF PROTEIN EXPRESSION [LARGE SCALE ANALYSIS]</scope>
</reference>
<reference key="5">
    <citation type="journal article" date="2007" name="J. Proteome Res.">
        <title>Large-scale phosphorylation analysis of alpha-factor-arrested Saccharomyces cerevisiae.</title>
        <authorList>
            <person name="Li X."/>
            <person name="Gerber S.A."/>
            <person name="Rudner A.D."/>
            <person name="Beausoleil S.A."/>
            <person name="Haas W."/>
            <person name="Villen J."/>
            <person name="Elias J.E."/>
            <person name="Gygi S.P."/>
        </authorList>
    </citation>
    <scope>PHOSPHORYLATION [LARGE SCALE ANALYSIS] AT SER-264</scope>
    <scope>IDENTIFICATION BY MASS SPECTROMETRY [LARGE SCALE ANALYSIS]</scope>
    <source>
        <strain>ADR376</strain>
    </source>
</reference>
<reference key="6">
    <citation type="journal article" date="2008" name="Mol. Cell. Proteomics">
        <title>A multidimensional chromatography technology for in-depth phosphoproteome analysis.</title>
        <authorList>
            <person name="Albuquerque C.P."/>
            <person name="Smolka M.B."/>
            <person name="Payne S.H."/>
            <person name="Bafna V."/>
            <person name="Eng J."/>
            <person name="Zhou H."/>
        </authorList>
    </citation>
    <scope>PHOSPHORYLATION [LARGE SCALE ANALYSIS] AT SER-220 AND SER-264</scope>
    <scope>IDENTIFICATION BY MASS SPECTROMETRY [LARGE SCALE ANALYSIS]</scope>
</reference>
<reference key="7">
    <citation type="journal article" date="2009" name="Science">
        <title>Global analysis of Cdk1 substrate phosphorylation sites provides insights into evolution.</title>
        <authorList>
            <person name="Holt L.J."/>
            <person name="Tuch B.B."/>
            <person name="Villen J."/>
            <person name="Johnson A.D."/>
            <person name="Gygi S.P."/>
            <person name="Morgan D.O."/>
        </authorList>
    </citation>
    <scope>PHOSPHORYLATION [LARGE SCALE ANALYSIS] AT SER-220</scope>
    <scope>IDENTIFICATION BY MASS SPECTROMETRY [LARGE SCALE ANALYSIS]</scope>
</reference>
<keyword id="KW-0539">Nucleus</keyword>
<keyword id="KW-0597">Phosphoprotein</keyword>
<keyword id="KW-1185">Reference proteome</keyword>
<keyword id="KW-0677">Repeat</keyword>
<keyword id="KW-0687">Ribonucleoprotein</keyword>
<keyword id="KW-0694">RNA-binding</keyword>
<keyword id="KW-0698">rRNA processing</keyword>
<sequence length="887" mass="101120">MSRIIVKGLPVYLTDDNLREHFTKRLRQKHSHQAVNGSGPDLITDVKILRDRNGESRRFGFIGYRNEEDAFDAVEYFNGSFINTSKIEVSMAKSFADPRVPQPMKEKRREALKRFREKEEKLLQEENRKKKKVDENKHSNIDDEIRKNKQLQEFMETMKPSSQVTSWEKVGIDKSIEDEKLKREEEDSSVQGNSLLAHALALKEENNKDEAPNLVIENESDDEYSALNRNRDEDQEDAGEEEKMISISNLKDTDIGLVNDDANSDEKENEKRRNLAQDEKVSDLDWFKQRRVRIKESEAETREKSSSYATEQNESLDTKKEEQPERAVPQKTDEELAIEKINQTGRLFLRNILYTSKEEDFRKLFSPFGELEEVHVALDTRTGQSKGFAYVLFKDSKNAVNAYVELDKQIFQGRLLHILPGEEKKSHRLDEFDLKNMPLKKQKELKRKAAASRQTFSWNSLYMNQDAVLGSVAAKLGLEKSQLIDAENSSSAVKQALAEAHVIGDVRKYFESKGVDLTKFSQLKSTNQRDDKVILVKNFPFGTTREELGEMFLPYGKLERLLMPPAGTIAIVQFRDTTSARAAFTKLSYKRFKDGIIYLERGPKDCFTKPAEADDLINNTSAKEEENPVEVKPSSNDLMEANKDVTEGSSNAHDEDVIDGPTVSIFIKNLNFSTTNQNLTDRFKVFTGFVVAQVKTKPDPKHQGKTLSMGFGFVEFRTKEQANAVIAAMDGTVIDGHKIQLKLSHRQASQSGNTKTKSNKKSGKIIVKNLPFEATRKDVFELFNSFGQLKSVRVPKKFDKSARGFAFVEFLLPKEAENAMDQLHGVHLLGRRLVMQYAEEDAVDAEEEIARMTKKVRKQVATNEMAALRNGGGRKKLDVDDEENEGF</sequence>
<dbReference type="EMBL" id="U32445">
    <property type="protein sequence ID" value="AAB68082.1"/>
    <property type="molecule type" value="Genomic_DNA"/>
</dbReference>
<dbReference type="EMBL" id="BK006949">
    <property type="protein sequence ID" value="DAA11527.1"/>
    <property type="molecule type" value="Genomic_DNA"/>
</dbReference>
<dbReference type="PIR" id="S59777">
    <property type="entry name" value="S59777"/>
</dbReference>
<dbReference type="RefSeq" id="NP_015437.1">
    <property type="nucleotide sequence ID" value="NM_001184209.1"/>
</dbReference>
<dbReference type="SMR" id="Q06106"/>
<dbReference type="BioGRID" id="36279">
    <property type="interactions" value="329"/>
</dbReference>
<dbReference type="DIP" id="DIP-6281N"/>
<dbReference type="FunCoup" id="Q06106">
    <property type="interactions" value="1397"/>
</dbReference>
<dbReference type="IntAct" id="Q06106">
    <property type="interactions" value="61"/>
</dbReference>
<dbReference type="MINT" id="Q06106"/>
<dbReference type="STRING" id="4932.YPR112C"/>
<dbReference type="iPTMnet" id="Q06106"/>
<dbReference type="PaxDb" id="4932-YPR112C"/>
<dbReference type="PeptideAtlas" id="Q06106"/>
<dbReference type="EnsemblFungi" id="YPR112C_mRNA">
    <property type="protein sequence ID" value="YPR112C"/>
    <property type="gene ID" value="YPR112C"/>
</dbReference>
<dbReference type="GeneID" id="856228"/>
<dbReference type="KEGG" id="sce:YPR112C"/>
<dbReference type="AGR" id="SGD:S000006316"/>
<dbReference type="SGD" id="S000006316">
    <property type="gene designation" value="MRD1"/>
</dbReference>
<dbReference type="VEuPathDB" id="FungiDB:YPR112C"/>
<dbReference type="eggNOG" id="KOG0110">
    <property type="taxonomic scope" value="Eukaryota"/>
</dbReference>
<dbReference type="GeneTree" id="ENSGT00840000129953"/>
<dbReference type="HOGENOM" id="CLU_008479_0_0_1"/>
<dbReference type="InParanoid" id="Q06106"/>
<dbReference type="OMA" id="FNNTCIQ"/>
<dbReference type="OrthoDB" id="439639at2759"/>
<dbReference type="BioCyc" id="YEAST:G3O-34252-MONOMER"/>
<dbReference type="BioGRID-ORCS" id="856228">
    <property type="hits" value="0 hits in 10 CRISPR screens"/>
</dbReference>
<dbReference type="PRO" id="PR:Q06106"/>
<dbReference type="Proteomes" id="UP000002311">
    <property type="component" value="Chromosome XVI"/>
</dbReference>
<dbReference type="RNAct" id="Q06106">
    <property type="molecule type" value="protein"/>
</dbReference>
<dbReference type="GO" id="GO:0030686">
    <property type="term" value="C:90S preribosome"/>
    <property type="evidence" value="ECO:0000314"/>
    <property type="project" value="SGD"/>
</dbReference>
<dbReference type="GO" id="GO:0005737">
    <property type="term" value="C:cytoplasm"/>
    <property type="evidence" value="ECO:0000318"/>
    <property type="project" value="GO_Central"/>
</dbReference>
<dbReference type="GO" id="GO:0005730">
    <property type="term" value="C:nucleolus"/>
    <property type="evidence" value="ECO:0000314"/>
    <property type="project" value="SGD"/>
</dbReference>
<dbReference type="GO" id="GO:0005634">
    <property type="term" value="C:nucleus"/>
    <property type="evidence" value="ECO:0000318"/>
    <property type="project" value="GO_Central"/>
</dbReference>
<dbReference type="GO" id="GO:1990904">
    <property type="term" value="C:ribonucleoprotein complex"/>
    <property type="evidence" value="ECO:0000318"/>
    <property type="project" value="GO_Central"/>
</dbReference>
<dbReference type="GO" id="GO:0032040">
    <property type="term" value="C:small-subunit processome"/>
    <property type="evidence" value="ECO:0000353"/>
    <property type="project" value="ComplexPortal"/>
</dbReference>
<dbReference type="GO" id="GO:0003729">
    <property type="term" value="F:mRNA binding"/>
    <property type="evidence" value="ECO:0007005"/>
    <property type="project" value="SGD"/>
</dbReference>
<dbReference type="GO" id="GO:0042134">
    <property type="term" value="F:rRNA primary transcript binding"/>
    <property type="evidence" value="ECO:0000314"/>
    <property type="project" value="SGD"/>
</dbReference>
<dbReference type="GO" id="GO:0000480">
    <property type="term" value="P:endonucleolytic cleavage in 5'-ETS of tricistronic rRNA transcript (SSU-rRNA, 5.8S rRNA, LSU-rRNA)"/>
    <property type="evidence" value="ECO:0000315"/>
    <property type="project" value="SGD"/>
</dbReference>
<dbReference type="GO" id="GO:0000447">
    <property type="term" value="P:endonucleolytic cleavage in ITS1 to separate SSU-rRNA from 5.8S rRNA and LSU-rRNA from tricistronic rRNA transcript (SSU-rRNA, 5.8S rRNA, LSU-rRNA)"/>
    <property type="evidence" value="ECO:0000315"/>
    <property type="project" value="SGD"/>
</dbReference>
<dbReference type="GO" id="GO:0000472">
    <property type="term" value="P:endonucleolytic cleavage to generate mature 5'-end of SSU-rRNA from (SSU-rRNA, 5.8S rRNA, LSU-rRNA)"/>
    <property type="evidence" value="ECO:0000315"/>
    <property type="project" value="SGD"/>
</dbReference>
<dbReference type="GO" id="GO:0030490">
    <property type="term" value="P:maturation of SSU-rRNA"/>
    <property type="evidence" value="ECO:0000303"/>
    <property type="project" value="ComplexPortal"/>
</dbReference>
<dbReference type="GO" id="GO:0071028">
    <property type="term" value="P:nuclear mRNA surveillance"/>
    <property type="evidence" value="ECO:0000318"/>
    <property type="project" value="GO_Central"/>
</dbReference>
<dbReference type="GO" id="GO:0016973">
    <property type="term" value="P:poly(A)+ mRNA export from nucleus"/>
    <property type="evidence" value="ECO:0000318"/>
    <property type="project" value="GO_Central"/>
</dbReference>
<dbReference type="GO" id="GO:0034462">
    <property type="term" value="P:small-subunit processome assembly"/>
    <property type="evidence" value="ECO:0000315"/>
    <property type="project" value="SGD"/>
</dbReference>
<dbReference type="CDD" id="cd12315">
    <property type="entry name" value="RRM1_RBM19_MRD1"/>
    <property type="match status" value="1"/>
</dbReference>
<dbReference type="CDD" id="cd12566">
    <property type="entry name" value="RRM2_MRD1"/>
    <property type="match status" value="1"/>
</dbReference>
<dbReference type="CDD" id="cd12568">
    <property type="entry name" value="RRM3_MRD1"/>
    <property type="match status" value="1"/>
</dbReference>
<dbReference type="CDD" id="cd12319">
    <property type="entry name" value="RRM4_MRD1"/>
    <property type="match status" value="1"/>
</dbReference>
<dbReference type="CDD" id="cd12570">
    <property type="entry name" value="RRM5_MRD1"/>
    <property type="match status" value="1"/>
</dbReference>
<dbReference type="FunFam" id="3.30.70.330:FF:000247">
    <property type="entry name" value="Multiple RNA-binding domain-containing protein 1"/>
    <property type="match status" value="1"/>
</dbReference>
<dbReference type="FunFam" id="3.30.70.330:FF:000452">
    <property type="entry name" value="Multiple RNA-binding domain-containing protein 1"/>
    <property type="match status" value="1"/>
</dbReference>
<dbReference type="FunFam" id="3.30.70.330:FF:000459">
    <property type="entry name" value="Multiple RNA-binding domain-containing protein 1"/>
    <property type="match status" value="1"/>
</dbReference>
<dbReference type="FunFam" id="3.30.70.330:FF:000706">
    <property type="entry name" value="Multiple RNA-binding domain-containing protein 1"/>
    <property type="match status" value="1"/>
</dbReference>
<dbReference type="FunFam" id="3.30.70.330:FF:001002">
    <property type="entry name" value="Multiple RNA-binding domain-containing protein 1"/>
    <property type="match status" value="1"/>
</dbReference>
<dbReference type="Gene3D" id="3.30.70.330">
    <property type="match status" value="5"/>
</dbReference>
<dbReference type="InterPro" id="IPR034482">
    <property type="entry name" value="Mrd1_RRM3"/>
</dbReference>
<dbReference type="InterPro" id="IPR012677">
    <property type="entry name" value="Nucleotide-bd_a/b_plait_sf"/>
</dbReference>
<dbReference type="InterPro" id="IPR035979">
    <property type="entry name" value="RBD_domain_sf"/>
</dbReference>
<dbReference type="InterPro" id="IPR000504">
    <property type="entry name" value="RRM_dom"/>
</dbReference>
<dbReference type="InterPro" id="IPR051945">
    <property type="entry name" value="RRM_MRD1_RNA_proc_ribogen"/>
</dbReference>
<dbReference type="PANTHER" id="PTHR48039">
    <property type="entry name" value="RNA-BINDING MOTIF PROTEIN 14B"/>
    <property type="match status" value="1"/>
</dbReference>
<dbReference type="PANTHER" id="PTHR48039:SF5">
    <property type="entry name" value="RNA-BINDING PROTEIN 28"/>
    <property type="match status" value="1"/>
</dbReference>
<dbReference type="Pfam" id="PF00076">
    <property type="entry name" value="RRM_1"/>
    <property type="match status" value="5"/>
</dbReference>
<dbReference type="SMART" id="SM00360">
    <property type="entry name" value="RRM"/>
    <property type="match status" value="5"/>
</dbReference>
<dbReference type="SUPFAM" id="SSF54928">
    <property type="entry name" value="RNA-binding domain, RBD"/>
    <property type="match status" value="3"/>
</dbReference>
<dbReference type="PROSITE" id="PS50102">
    <property type="entry name" value="RRM"/>
    <property type="match status" value="5"/>
</dbReference>
<comment type="function">
    <text evidence="3">Involved in pre-rRNA processing. Required for maintaining steady-state levels of 40S ribosomal subunit. Required for the initial processing of pre-rRNA at the A0 to A2 sites, leading to the processing of the 23S pre-rRNA intermediate to the 18S rRNA.</text>
</comment>
<comment type="subunit">
    <text evidence="3">Interacts with NOP1. Binds to the 35S pre-rRNA and the U3 snoRNA.</text>
</comment>
<comment type="interaction">
    <interactant intactId="EBI-34383">
        <id>Q06106</id>
    </interactant>
    <interactant intactId="EBI-1878">
        <id>P53254</id>
        <label>UTP22</label>
    </interactant>
    <organismsDiffer>false</organismsDiffer>
    <experiments>3</experiments>
</comment>
<comment type="subcellular location">
    <subcellularLocation>
        <location evidence="3">Nucleus</location>
    </subcellularLocation>
</comment>
<comment type="miscellaneous">
    <text evidence="4">Present with 2220 molecules/cell in log phase SD medium.</text>
</comment>
<comment type="similarity">
    <text evidence="5">Belongs to the RRM MRD1 family.</text>
</comment>
<protein>
    <recommendedName>
        <fullName>Multiple RNA-binding domain-containing protein 1</fullName>
    </recommendedName>
</protein>
<proteinExistence type="evidence at protein level"/>
<accession>Q06106</accession>
<accession>D6W4B1</accession>
<gene>
    <name type="primary">MRD1</name>
    <name type="ordered locus">YPR112C</name>
</gene>
<evidence type="ECO:0000255" key="1">
    <source>
        <dbReference type="PROSITE-ProRule" id="PRU00176"/>
    </source>
</evidence>
<evidence type="ECO:0000256" key="2">
    <source>
        <dbReference type="SAM" id="MobiDB-lite"/>
    </source>
</evidence>
<evidence type="ECO:0000269" key="3">
    <source>
    </source>
</evidence>
<evidence type="ECO:0000269" key="4">
    <source>
    </source>
</evidence>
<evidence type="ECO:0000305" key="5"/>
<evidence type="ECO:0007744" key="6">
    <source>
    </source>
</evidence>
<evidence type="ECO:0007744" key="7">
    <source>
    </source>
</evidence>
<evidence type="ECO:0007744" key="8">
    <source>
    </source>
</evidence>
<organism>
    <name type="scientific">Saccharomyces cerevisiae (strain ATCC 204508 / S288c)</name>
    <name type="common">Baker's yeast</name>
    <dbReference type="NCBI Taxonomy" id="559292"/>
    <lineage>
        <taxon>Eukaryota</taxon>
        <taxon>Fungi</taxon>
        <taxon>Dikarya</taxon>
        <taxon>Ascomycota</taxon>
        <taxon>Saccharomycotina</taxon>
        <taxon>Saccharomycetes</taxon>
        <taxon>Saccharomycetales</taxon>
        <taxon>Saccharomycetaceae</taxon>
        <taxon>Saccharomyces</taxon>
    </lineage>
</organism>
<feature type="chain" id="PRO_0000081647" description="Multiple RNA-binding domain-containing protein 1">
    <location>
        <begin position="1"/>
        <end position="887"/>
    </location>
</feature>
<feature type="domain" description="RRM 1" evidence="1">
    <location>
        <begin position="2"/>
        <end position="94"/>
    </location>
</feature>
<feature type="domain" description="RRM 2" evidence="1">
    <location>
        <begin position="345"/>
        <end position="423"/>
    </location>
</feature>
<feature type="domain" description="RRM 3" evidence="1">
    <location>
        <begin position="532"/>
        <end position="604"/>
    </location>
</feature>
<feature type="domain" description="RRM 4" evidence="1">
    <location>
        <begin position="663"/>
        <end position="746"/>
    </location>
</feature>
<feature type="domain" description="RRM 5" evidence="1">
    <location>
        <begin position="763"/>
        <end position="840"/>
    </location>
</feature>
<feature type="region of interest" description="Disordered" evidence="2">
    <location>
        <begin position="121"/>
        <end position="143"/>
    </location>
</feature>
<feature type="region of interest" description="Disordered" evidence="2">
    <location>
        <begin position="203"/>
        <end position="276"/>
    </location>
</feature>
<feature type="region of interest" description="Disordered" evidence="2">
    <location>
        <begin position="297"/>
        <end position="336"/>
    </location>
</feature>
<feature type="region of interest" description="Disordered" evidence="2">
    <location>
        <begin position="864"/>
        <end position="887"/>
    </location>
</feature>
<feature type="compositionally biased region" description="Basic and acidic residues" evidence="2">
    <location>
        <begin position="264"/>
        <end position="276"/>
    </location>
</feature>
<feature type="compositionally biased region" description="Polar residues" evidence="2">
    <location>
        <begin position="306"/>
        <end position="315"/>
    </location>
</feature>
<feature type="compositionally biased region" description="Basic and acidic residues" evidence="2">
    <location>
        <begin position="316"/>
        <end position="325"/>
    </location>
</feature>
<feature type="modified residue" description="Phosphoserine" evidence="7 8">
    <location>
        <position position="220"/>
    </location>
</feature>
<feature type="modified residue" description="Phosphoserine" evidence="6 7">
    <location>
        <position position="264"/>
    </location>
</feature>
<name>MRD1_YEAST</name>